<feature type="chain" id="PRO_0000138369" description="UvrABC system protein C">
    <location>
        <begin position="1"/>
        <end position="579"/>
    </location>
</feature>
<feature type="domain" description="GIY-YIG" evidence="1">
    <location>
        <begin position="12"/>
        <end position="89"/>
    </location>
</feature>
<feature type="domain" description="UVR" evidence="1">
    <location>
        <begin position="193"/>
        <end position="228"/>
    </location>
</feature>
<accession>O26541</accession>
<comment type="function">
    <text evidence="1">The UvrABC repair system catalyzes the recognition and processing of DNA lesions. UvrC both incises the 5' and 3' sides of the lesion. The N-terminal half is responsible for the 3' incision and the C-terminal half is responsible for the 5' incision.</text>
</comment>
<comment type="subunit">
    <text evidence="1">Interacts with UvrB in an incision complex.</text>
</comment>
<comment type="subcellular location">
    <subcellularLocation>
        <location evidence="1">Cytoplasm</location>
    </subcellularLocation>
</comment>
<comment type="similarity">
    <text evidence="1">Belongs to the UvrC family.</text>
</comment>
<reference key="1">
    <citation type="journal article" date="1997" name="J. Bacteriol.">
        <title>Complete genome sequence of Methanobacterium thermoautotrophicum deltaH: functional analysis and comparative genomics.</title>
        <authorList>
            <person name="Smith D.R."/>
            <person name="Doucette-Stamm L.A."/>
            <person name="Deloughery C."/>
            <person name="Lee H.-M."/>
            <person name="Dubois J."/>
            <person name="Aldredge T."/>
            <person name="Bashirzadeh R."/>
            <person name="Blakely D."/>
            <person name="Cook R."/>
            <person name="Gilbert K."/>
            <person name="Harrison D."/>
            <person name="Hoang L."/>
            <person name="Keagle P."/>
            <person name="Lumm W."/>
            <person name="Pothier B."/>
            <person name="Qiu D."/>
            <person name="Spadafora R."/>
            <person name="Vicare R."/>
            <person name="Wang Y."/>
            <person name="Wierzbowski J."/>
            <person name="Gibson R."/>
            <person name="Jiwani N."/>
            <person name="Caruso A."/>
            <person name="Bush D."/>
            <person name="Safer H."/>
            <person name="Patwell D."/>
            <person name="Prabhakar S."/>
            <person name="McDougall S."/>
            <person name="Shimer G."/>
            <person name="Goyal A."/>
            <person name="Pietrovski S."/>
            <person name="Church G.M."/>
            <person name="Daniels C.J."/>
            <person name="Mao J.-I."/>
            <person name="Rice P."/>
            <person name="Noelling J."/>
            <person name="Reeve J.N."/>
        </authorList>
    </citation>
    <scope>NUCLEOTIDE SEQUENCE [LARGE SCALE GENOMIC DNA]</scope>
    <source>
        <strain>ATCC 29096 / DSM 1053 / JCM 10044 / NBRC 100330 / Delta H</strain>
    </source>
</reference>
<keyword id="KW-0963">Cytoplasm</keyword>
<keyword id="KW-0227">DNA damage</keyword>
<keyword id="KW-0228">DNA excision</keyword>
<keyword id="KW-0234">DNA repair</keyword>
<keyword id="KW-0267">Excision nuclease</keyword>
<keyword id="KW-1185">Reference proteome</keyword>
<keyword id="KW-0742">SOS response</keyword>
<evidence type="ECO:0000255" key="1">
    <source>
        <dbReference type="HAMAP-Rule" id="MF_00203"/>
    </source>
</evidence>
<protein>
    <recommendedName>
        <fullName evidence="1">UvrABC system protein C</fullName>
        <shortName evidence="1">Protein UvrC</shortName>
    </recommendedName>
    <alternativeName>
        <fullName evidence="1">Excinuclease ABC subunit C</fullName>
    </alternativeName>
</protein>
<gene>
    <name evidence="1" type="primary">uvrC</name>
    <name type="ordered locus">MTH_441</name>
</gene>
<name>UVRC_METTH</name>
<dbReference type="EMBL" id="AE000666">
    <property type="protein sequence ID" value="AAB84947.1"/>
    <property type="molecule type" value="Genomic_DNA"/>
</dbReference>
<dbReference type="PIR" id="F69157">
    <property type="entry name" value="F69157"/>
</dbReference>
<dbReference type="RefSeq" id="WP_010876080.1">
    <property type="nucleotide sequence ID" value="NC_000916.1"/>
</dbReference>
<dbReference type="SMR" id="O26541"/>
<dbReference type="STRING" id="187420.MTH_441"/>
<dbReference type="PaxDb" id="187420-MTH_441"/>
<dbReference type="EnsemblBacteria" id="AAB84947">
    <property type="protein sequence ID" value="AAB84947"/>
    <property type="gene ID" value="MTH_441"/>
</dbReference>
<dbReference type="GeneID" id="77400986"/>
<dbReference type="KEGG" id="mth:MTH_441"/>
<dbReference type="PATRIC" id="fig|187420.15.peg.411"/>
<dbReference type="HOGENOM" id="CLU_014841_3_2_2"/>
<dbReference type="InParanoid" id="O26541"/>
<dbReference type="Proteomes" id="UP000005223">
    <property type="component" value="Chromosome"/>
</dbReference>
<dbReference type="GO" id="GO:0005737">
    <property type="term" value="C:cytoplasm"/>
    <property type="evidence" value="ECO:0007669"/>
    <property type="project" value="UniProtKB-SubCell"/>
</dbReference>
<dbReference type="GO" id="GO:0009380">
    <property type="term" value="C:excinuclease repair complex"/>
    <property type="evidence" value="ECO:0007669"/>
    <property type="project" value="InterPro"/>
</dbReference>
<dbReference type="GO" id="GO:0003677">
    <property type="term" value="F:DNA binding"/>
    <property type="evidence" value="ECO:0007669"/>
    <property type="project" value="UniProtKB-UniRule"/>
</dbReference>
<dbReference type="GO" id="GO:0009381">
    <property type="term" value="F:excinuclease ABC activity"/>
    <property type="evidence" value="ECO:0007669"/>
    <property type="project" value="UniProtKB-UniRule"/>
</dbReference>
<dbReference type="GO" id="GO:0006289">
    <property type="term" value="P:nucleotide-excision repair"/>
    <property type="evidence" value="ECO:0007669"/>
    <property type="project" value="UniProtKB-UniRule"/>
</dbReference>
<dbReference type="GO" id="GO:0009432">
    <property type="term" value="P:SOS response"/>
    <property type="evidence" value="ECO:0007669"/>
    <property type="project" value="UniProtKB-UniRule"/>
</dbReference>
<dbReference type="CDD" id="cd10434">
    <property type="entry name" value="GIY-YIG_UvrC_Cho"/>
    <property type="match status" value="1"/>
</dbReference>
<dbReference type="FunFam" id="3.40.1440.10:FF:000001">
    <property type="entry name" value="UvrABC system protein C"/>
    <property type="match status" value="1"/>
</dbReference>
<dbReference type="Gene3D" id="1.10.150.20">
    <property type="entry name" value="5' to 3' exonuclease, C-terminal subdomain"/>
    <property type="match status" value="1"/>
</dbReference>
<dbReference type="Gene3D" id="3.40.1440.10">
    <property type="entry name" value="GIY-YIG endonuclease"/>
    <property type="match status" value="1"/>
</dbReference>
<dbReference type="Gene3D" id="4.10.860.10">
    <property type="entry name" value="UVR domain"/>
    <property type="match status" value="1"/>
</dbReference>
<dbReference type="Gene3D" id="3.30.420.340">
    <property type="entry name" value="UvrC, RNAse H endonuclease domain"/>
    <property type="match status" value="1"/>
</dbReference>
<dbReference type="HAMAP" id="MF_00203">
    <property type="entry name" value="UvrC"/>
    <property type="match status" value="1"/>
</dbReference>
<dbReference type="InterPro" id="IPR000305">
    <property type="entry name" value="GIY-YIG_endonuc"/>
</dbReference>
<dbReference type="InterPro" id="IPR035901">
    <property type="entry name" value="GIY-YIG_endonuc_sf"/>
</dbReference>
<dbReference type="InterPro" id="IPR047296">
    <property type="entry name" value="GIY-YIG_UvrC_Cho"/>
</dbReference>
<dbReference type="InterPro" id="IPR003583">
    <property type="entry name" value="Hlx-hairpin-Hlx_DNA-bd_motif"/>
</dbReference>
<dbReference type="InterPro" id="IPR010994">
    <property type="entry name" value="RuvA_2-like"/>
</dbReference>
<dbReference type="InterPro" id="IPR001943">
    <property type="entry name" value="UVR_dom"/>
</dbReference>
<dbReference type="InterPro" id="IPR036876">
    <property type="entry name" value="UVR_dom_sf"/>
</dbReference>
<dbReference type="InterPro" id="IPR050066">
    <property type="entry name" value="UvrABC_protein_C"/>
</dbReference>
<dbReference type="InterPro" id="IPR004791">
    <property type="entry name" value="UvrC"/>
</dbReference>
<dbReference type="InterPro" id="IPR001162">
    <property type="entry name" value="UvrC_RNase_H_dom"/>
</dbReference>
<dbReference type="InterPro" id="IPR038476">
    <property type="entry name" value="UvrC_RNase_H_dom_sf"/>
</dbReference>
<dbReference type="NCBIfam" id="NF001824">
    <property type="entry name" value="PRK00558.1-5"/>
    <property type="match status" value="1"/>
</dbReference>
<dbReference type="NCBIfam" id="TIGR00194">
    <property type="entry name" value="uvrC"/>
    <property type="match status" value="1"/>
</dbReference>
<dbReference type="PANTHER" id="PTHR30562:SF1">
    <property type="entry name" value="UVRABC SYSTEM PROTEIN C"/>
    <property type="match status" value="1"/>
</dbReference>
<dbReference type="PANTHER" id="PTHR30562">
    <property type="entry name" value="UVRC/OXIDOREDUCTASE"/>
    <property type="match status" value="1"/>
</dbReference>
<dbReference type="Pfam" id="PF01541">
    <property type="entry name" value="GIY-YIG"/>
    <property type="match status" value="1"/>
</dbReference>
<dbReference type="Pfam" id="PF14520">
    <property type="entry name" value="HHH_5"/>
    <property type="match status" value="1"/>
</dbReference>
<dbReference type="Pfam" id="PF02151">
    <property type="entry name" value="UVR"/>
    <property type="match status" value="1"/>
</dbReference>
<dbReference type="Pfam" id="PF22920">
    <property type="entry name" value="UvrC_RNaseH"/>
    <property type="match status" value="1"/>
</dbReference>
<dbReference type="Pfam" id="PF08459">
    <property type="entry name" value="UvrC_RNaseH_dom"/>
    <property type="match status" value="1"/>
</dbReference>
<dbReference type="SMART" id="SM00465">
    <property type="entry name" value="GIYc"/>
    <property type="match status" value="1"/>
</dbReference>
<dbReference type="SMART" id="SM00278">
    <property type="entry name" value="HhH1"/>
    <property type="match status" value="2"/>
</dbReference>
<dbReference type="SUPFAM" id="SSF46600">
    <property type="entry name" value="C-terminal UvrC-binding domain of UvrB"/>
    <property type="match status" value="1"/>
</dbReference>
<dbReference type="SUPFAM" id="SSF82771">
    <property type="entry name" value="GIY-YIG endonuclease"/>
    <property type="match status" value="1"/>
</dbReference>
<dbReference type="SUPFAM" id="SSF47781">
    <property type="entry name" value="RuvA domain 2-like"/>
    <property type="match status" value="1"/>
</dbReference>
<dbReference type="PROSITE" id="PS50164">
    <property type="entry name" value="GIY_YIG"/>
    <property type="match status" value="1"/>
</dbReference>
<dbReference type="PROSITE" id="PS50151">
    <property type="entry name" value="UVR"/>
    <property type="match status" value="1"/>
</dbReference>
<dbReference type="PROSITE" id="PS50165">
    <property type="entry name" value="UVRC"/>
    <property type="match status" value="1"/>
</dbReference>
<proteinExistence type="inferred from homology"/>
<sequence length="579" mass="66294">MTRVKDPEKLPDATGVYIFRDRDDRVLYVGKSISIRKRVSSYFREQENPRLRIMMRHLESIEYILTQNEKEALILESNLIKRYRPPYNVRLKDDKRYPFIKITDEEYPRVLIVRTIGRDSARYYGPFTDTGAVRRTLKLIKSLFRIRSCRRMDGPCLNSQIDLCYAPCDGRISREDYREIIEKVDLFFQGRYQEVIEVLEEEMKEASERLEFERAARIRDQIESIREVMERQHASFTDSIDQDIVALERGGDTSAVVVLQIRDGKITGKDDFILRGSAPRTEILEAFLKQYYAIPRRVPSEILTQYPVEDGVIAEWLSELRGEEVKIHSPEGGAGRRLLNIAWKNASVILKQKGRVRDALLQLKDDLKLPEIPRRMEGLDISNIAGESATGSVAVFIDGKPSSGSYRRYRISAQGPDDYAMMRELVERRYSSPELRKPDLVLIDGGKGQLGVALEALKNCGVHVPVVGIAKKREEVYLPGLSEPVDVDDGALQILRHLRDEAHRFAVKYHRTIRDRDSLESELDGIRGVGPVRKRALLEHFGSLDGVRDASVEELASIPGMTREVAERIHRHFSGDLAG</sequence>
<organism>
    <name type="scientific">Methanothermobacter thermautotrophicus (strain ATCC 29096 / DSM 1053 / JCM 10044 / NBRC 100330 / Delta H)</name>
    <name type="common">Methanobacterium thermoautotrophicum</name>
    <dbReference type="NCBI Taxonomy" id="187420"/>
    <lineage>
        <taxon>Archaea</taxon>
        <taxon>Methanobacteriati</taxon>
        <taxon>Methanobacteriota</taxon>
        <taxon>Methanomada group</taxon>
        <taxon>Methanobacteria</taxon>
        <taxon>Methanobacteriales</taxon>
        <taxon>Methanobacteriaceae</taxon>
        <taxon>Methanothermobacter</taxon>
    </lineage>
</organism>